<protein>
    <recommendedName>
        <fullName evidence="1">Probable small ribosomal subunit protein cS23</fullName>
    </recommendedName>
    <alternativeName>
        <fullName>Probable 30S ribosomal protein PSRP-3</fullName>
    </alternativeName>
    <alternativeName>
        <fullName>Ycf65-like protein</fullName>
    </alternativeName>
</protein>
<keyword id="KW-0687">Ribonucleoprotein</keyword>
<keyword id="KW-0689">Ribosomal protein</keyword>
<reference key="1">
    <citation type="journal article" date="2014" name="Stand. Genomic Sci.">
        <title>Complete genome sequence of Anabaena variabilis ATCC 29413.</title>
        <authorList>
            <person name="Thiel T."/>
            <person name="Pratte B.S."/>
            <person name="Zhong J."/>
            <person name="Goodwin L."/>
            <person name="Copeland A."/>
            <person name="Lucas S."/>
            <person name="Han C."/>
            <person name="Pitluck S."/>
            <person name="Land M.L."/>
            <person name="Kyrpides N.C."/>
            <person name="Woyke T."/>
        </authorList>
    </citation>
    <scope>NUCLEOTIDE SEQUENCE [LARGE SCALE GENOMIC DNA]</scope>
    <source>
        <strain>ATCC 29413 / PCC 7937</strain>
    </source>
</reference>
<name>RRP3_TRIV2</name>
<feature type="chain" id="PRO_1000051527" description="Probable small ribosomal subunit protein cS23">
    <location>
        <begin position="1"/>
        <end position="99"/>
    </location>
</feature>
<dbReference type="EMBL" id="CP000117">
    <property type="protein sequence ID" value="ABA23471.1"/>
    <property type="molecule type" value="Genomic_DNA"/>
</dbReference>
<dbReference type="RefSeq" id="WP_011320561.1">
    <property type="nucleotide sequence ID" value="NC_007413.1"/>
</dbReference>
<dbReference type="SMR" id="Q3M6B5"/>
<dbReference type="STRING" id="240292.Ava_3866"/>
<dbReference type="KEGG" id="ava:Ava_3866"/>
<dbReference type="eggNOG" id="ENOG503137T">
    <property type="taxonomic scope" value="Bacteria"/>
</dbReference>
<dbReference type="HOGENOM" id="CLU_132693_1_0_3"/>
<dbReference type="Proteomes" id="UP000002533">
    <property type="component" value="Chromosome"/>
</dbReference>
<dbReference type="GO" id="GO:1990904">
    <property type="term" value="C:ribonucleoprotein complex"/>
    <property type="evidence" value="ECO:0007669"/>
    <property type="project" value="UniProtKB-KW"/>
</dbReference>
<dbReference type="GO" id="GO:0005840">
    <property type="term" value="C:ribosome"/>
    <property type="evidence" value="ECO:0007669"/>
    <property type="project" value="UniProtKB-KW"/>
</dbReference>
<dbReference type="GO" id="GO:0003735">
    <property type="term" value="F:structural constituent of ribosome"/>
    <property type="evidence" value="ECO:0007669"/>
    <property type="project" value="InterPro"/>
</dbReference>
<dbReference type="GO" id="GO:0006412">
    <property type="term" value="P:translation"/>
    <property type="evidence" value="ECO:0007669"/>
    <property type="project" value="UniProtKB-UniRule"/>
</dbReference>
<dbReference type="Gene3D" id="3.30.390.140">
    <property type="match status" value="1"/>
</dbReference>
<dbReference type="HAMAP" id="MF_00619">
    <property type="entry name" value="Ribosomal_plastid_cS23"/>
    <property type="match status" value="1"/>
</dbReference>
<dbReference type="InterPro" id="IPR038447">
    <property type="entry name" value="PSRP-3/Ycf65_sf"/>
</dbReference>
<dbReference type="InterPro" id="IPR006924">
    <property type="entry name" value="Ribosomal_PSRP3/Ycf65"/>
</dbReference>
<dbReference type="NCBIfam" id="NF002740">
    <property type="entry name" value="PRK02724.1"/>
    <property type="match status" value="1"/>
</dbReference>
<dbReference type="PANTHER" id="PTHR35108">
    <property type="entry name" value="30S RIBOSOMAL PROTEIN 3, CHLOROPLASTIC"/>
    <property type="match status" value="1"/>
</dbReference>
<dbReference type="PANTHER" id="PTHR35108:SF1">
    <property type="entry name" value="OS04G0461100 PROTEIN"/>
    <property type="match status" value="1"/>
</dbReference>
<dbReference type="Pfam" id="PF04839">
    <property type="entry name" value="PSRP-3_Ycf65"/>
    <property type="match status" value="1"/>
</dbReference>
<proteinExistence type="inferred from homology"/>
<sequence length="99" mass="11586">MSKFILKILWLDENVALAVDQVVGKGTSPLTKYFFWPRNDAWEELKKELESKHWISDLDRVELLNKATEVINYWQEEGRNRPMAEAQLKFPEVTFTGSA</sequence>
<accession>Q3M6B5</accession>
<evidence type="ECO:0000255" key="1">
    <source>
        <dbReference type="HAMAP-Rule" id="MF_00619"/>
    </source>
</evidence>
<organism>
    <name type="scientific">Trichormus variabilis (strain ATCC 29413 / PCC 7937)</name>
    <name type="common">Anabaena variabilis</name>
    <dbReference type="NCBI Taxonomy" id="240292"/>
    <lineage>
        <taxon>Bacteria</taxon>
        <taxon>Bacillati</taxon>
        <taxon>Cyanobacteriota</taxon>
        <taxon>Cyanophyceae</taxon>
        <taxon>Nostocales</taxon>
        <taxon>Nostocaceae</taxon>
        <taxon>Trichormus</taxon>
    </lineage>
</organism>
<comment type="function">
    <text evidence="1">Probably a ribosomal protein or a ribosome-associated protein.</text>
</comment>
<comment type="subunit">
    <text evidence="1">Part of the 30S ribosomal subunit.</text>
</comment>
<comment type="similarity">
    <text evidence="1">Belongs to the chloroplast-specific ribosomal protein cS23 family.</text>
</comment>
<gene>
    <name type="ordered locus">Ava_3866</name>
</gene>